<evidence type="ECO:0000255" key="1">
    <source>
        <dbReference type="HAMAP-Rule" id="MF_00016"/>
    </source>
</evidence>
<evidence type="ECO:0000305" key="2"/>
<protein>
    <recommendedName>
        <fullName evidence="1">Holliday junction branch migration complex subunit RuvB</fullName>
        <ecNumber evidence="1">3.6.4.-</ecNumber>
    </recommendedName>
</protein>
<reference key="1">
    <citation type="journal article" date="2001" name="Genome Res.">
        <title>The complete genome sequence of the lactic acid bacterium Lactococcus lactis ssp. lactis IL1403.</title>
        <authorList>
            <person name="Bolotin A."/>
            <person name="Wincker P."/>
            <person name="Mauger S."/>
            <person name="Jaillon O."/>
            <person name="Malarme K."/>
            <person name="Weissenbach J."/>
            <person name="Ehrlich S.D."/>
            <person name="Sorokin A."/>
        </authorList>
    </citation>
    <scope>NUCLEOTIDE SEQUENCE [LARGE SCALE GENOMIC DNA]</scope>
    <source>
        <strain>IL1403</strain>
    </source>
</reference>
<proteinExistence type="inferred from homology"/>
<accession>Q9CDL3</accession>
<feature type="chain" id="PRO_0000165543" description="Holliday junction branch migration complex subunit RuvB">
    <location>
        <begin position="1"/>
        <end position="333"/>
    </location>
</feature>
<feature type="region of interest" description="Large ATPase domain (RuvB-L)" evidence="1">
    <location>
        <begin position="1"/>
        <end position="181"/>
    </location>
</feature>
<feature type="region of interest" description="Small ATPAse domain (RuvB-S)" evidence="1">
    <location>
        <begin position="182"/>
        <end position="252"/>
    </location>
</feature>
<feature type="region of interest" description="Head domain (RuvB-H)" evidence="1">
    <location>
        <begin position="255"/>
        <end position="333"/>
    </location>
</feature>
<feature type="binding site" evidence="1">
    <location>
        <position position="20"/>
    </location>
    <ligand>
        <name>ATP</name>
        <dbReference type="ChEBI" id="CHEBI:30616"/>
    </ligand>
</feature>
<feature type="binding site" evidence="1">
    <location>
        <position position="21"/>
    </location>
    <ligand>
        <name>ATP</name>
        <dbReference type="ChEBI" id="CHEBI:30616"/>
    </ligand>
</feature>
<feature type="binding site" evidence="1">
    <location>
        <position position="62"/>
    </location>
    <ligand>
        <name>ATP</name>
        <dbReference type="ChEBI" id="CHEBI:30616"/>
    </ligand>
</feature>
<feature type="binding site" evidence="1">
    <location>
        <position position="65"/>
    </location>
    <ligand>
        <name>ATP</name>
        <dbReference type="ChEBI" id="CHEBI:30616"/>
    </ligand>
</feature>
<feature type="binding site" evidence="1">
    <location>
        <position position="66"/>
    </location>
    <ligand>
        <name>ATP</name>
        <dbReference type="ChEBI" id="CHEBI:30616"/>
    </ligand>
</feature>
<feature type="binding site" evidence="1">
    <location>
        <position position="66"/>
    </location>
    <ligand>
        <name>Mg(2+)</name>
        <dbReference type="ChEBI" id="CHEBI:18420"/>
    </ligand>
</feature>
<feature type="binding site" evidence="1">
    <location>
        <position position="67"/>
    </location>
    <ligand>
        <name>ATP</name>
        <dbReference type="ChEBI" id="CHEBI:30616"/>
    </ligand>
</feature>
<feature type="binding site" evidence="1">
    <location>
        <begin position="128"/>
        <end position="130"/>
    </location>
    <ligand>
        <name>ATP</name>
        <dbReference type="ChEBI" id="CHEBI:30616"/>
    </ligand>
</feature>
<feature type="binding site" evidence="1">
    <location>
        <position position="171"/>
    </location>
    <ligand>
        <name>ATP</name>
        <dbReference type="ChEBI" id="CHEBI:30616"/>
    </ligand>
</feature>
<feature type="binding site" evidence="1">
    <location>
        <position position="181"/>
    </location>
    <ligand>
        <name>ATP</name>
        <dbReference type="ChEBI" id="CHEBI:30616"/>
    </ligand>
</feature>
<feature type="binding site" evidence="1">
    <location>
        <position position="218"/>
    </location>
    <ligand>
        <name>ATP</name>
        <dbReference type="ChEBI" id="CHEBI:30616"/>
    </ligand>
</feature>
<feature type="binding site" evidence="1">
    <location>
        <position position="291"/>
    </location>
    <ligand>
        <name>DNA</name>
        <dbReference type="ChEBI" id="CHEBI:16991"/>
    </ligand>
</feature>
<feature type="binding site" evidence="1">
    <location>
        <position position="310"/>
    </location>
    <ligand>
        <name>DNA</name>
        <dbReference type="ChEBI" id="CHEBI:16991"/>
    </ligand>
</feature>
<feature type="binding site" evidence="1">
    <location>
        <position position="315"/>
    </location>
    <ligand>
        <name>DNA</name>
        <dbReference type="ChEBI" id="CHEBI:16991"/>
    </ligand>
</feature>
<sequence length="333" mass="37633">MNDILNKEPMEEDYGIEKSLRPQFFNQYIGQDKVKEQLEIFIKAAKMREEVLDHVLLFGPPGLGKTTMAFVIANELGVNIKQTAGPAIEKPGDLVAILNELEPGDVLFIDEIHRMPMQVEEVLYSAMEDFYIDIMLGSGDGSRSVHLDLPPFTLVGATTRAGMLSNPLRARFGISSHMEYYQERDLEEIVKRTADIFEVEVIDNAALEIALRSRGTPRIANRLLKRVRDFAQIMGDGRVDKAITDKALSILDVDAAGLDYIDQKILRTMIEMYHGGPVGIGTLAVNIAEDRETVEDMYEPYLIQKGFLMRTKQGRKVTQRAYEHLGYVYNEED</sequence>
<organism>
    <name type="scientific">Lactococcus lactis subsp. lactis (strain IL1403)</name>
    <name type="common">Streptococcus lactis</name>
    <dbReference type="NCBI Taxonomy" id="272623"/>
    <lineage>
        <taxon>Bacteria</taxon>
        <taxon>Bacillati</taxon>
        <taxon>Bacillota</taxon>
        <taxon>Bacilli</taxon>
        <taxon>Lactobacillales</taxon>
        <taxon>Streptococcaceae</taxon>
        <taxon>Lactococcus</taxon>
    </lineage>
</organism>
<comment type="function">
    <text evidence="1">The RuvA-RuvB-RuvC complex processes Holliday junction (HJ) DNA during genetic recombination and DNA repair, while the RuvA-RuvB complex plays an important role in the rescue of blocked DNA replication forks via replication fork reversal (RFR). RuvA specifically binds to HJ cruciform DNA, conferring on it an open structure. The RuvB hexamer acts as an ATP-dependent pump, pulling dsDNA into and through the RuvAB complex. RuvB forms 2 homohexamers on either side of HJ DNA bound by 1 or 2 RuvA tetramers; 4 subunits per hexamer contact DNA at a time. Coordinated motions by a converter formed by DNA-disengaged RuvB subunits stimulates ATP hydrolysis and nucleotide exchange. Immobilization of the converter enables RuvB to convert the ATP-contained energy into a lever motion, pulling 2 nucleotides of DNA out of the RuvA tetramer per ATP hydrolyzed, thus driving DNA branch migration. The RuvB motors rotate together with the DNA substrate, which together with the progressing nucleotide cycle form the mechanistic basis for DNA recombination by continuous HJ branch migration. Branch migration allows RuvC to scan DNA until it finds its consensus sequence, where it cleaves and resolves cruciform DNA.</text>
</comment>
<comment type="catalytic activity">
    <reaction evidence="1">
        <text>ATP + H2O = ADP + phosphate + H(+)</text>
        <dbReference type="Rhea" id="RHEA:13065"/>
        <dbReference type="ChEBI" id="CHEBI:15377"/>
        <dbReference type="ChEBI" id="CHEBI:15378"/>
        <dbReference type="ChEBI" id="CHEBI:30616"/>
        <dbReference type="ChEBI" id="CHEBI:43474"/>
        <dbReference type="ChEBI" id="CHEBI:456216"/>
    </reaction>
</comment>
<comment type="subunit">
    <text evidence="1">Homohexamer. Forms an RuvA(8)-RuvB(12)-Holliday junction (HJ) complex. HJ DNA is sandwiched between 2 RuvA tetramers; dsDNA enters through RuvA and exits via RuvB. An RuvB hexamer assembles on each DNA strand where it exits the tetramer. Each RuvB hexamer is contacted by two RuvA subunits (via domain III) on 2 adjacent RuvB subunits; this complex drives branch migration. In the full resolvosome a probable DNA-RuvA(4)-RuvB(12)-RuvC(2) complex forms which resolves the HJ.</text>
</comment>
<comment type="subcellular location">
    <subcellularLocation>
        <location evidence="1">Cytoplasm</location>
    </subcellularLocation>
</comment>
<comment type="domain">
    <text evidence="1">Has 3 domains, the large (RuvB-L) and small ATPase (RuvB-S) domains and the C-terminal head (RuvB-H) domain. The head domain binds DNA, while the ATPase domains jointly bind ATP, ADP or are empty depending on the state of the subunit in the translocation cycle. During a single DNA translocation step the structure of each domain remains the same, but their relative positions change.</text>
</comment>
<comment type="similarity">
    <text evidence="1">Belongs to the RuvB family.</text>
</comment>
<comment type="sequence caution" evidence="2">
    <conflict type="erroneous initiation">
        <sequence resource="EMBL-CDS" id="AAK06304"/>
    </conflict>
    <text>Truncated N-terminus.</text>
</comment>
<dbReference type="EC" id="3.6.4.-" evidence="1"/>
<dbReference type="EMBL" id="AE005176">
    <property type="protein sequence ID" value="AAK06304.1"/>
    <property type="status" value="ALT_INIT"/>
    <property type="molecule type" value="Genomic_DNA"/>
</dbReference>
<dbReference type="PIR" id="F86900">
    <property type="entry name" value="F86900"/>
</dbReference>
<dbReference type="RefSeq" id="NP_268363.1">
    <property type="nucleotide sequence ID" value="NC_002662.1"/>
</dbReference>
<dbReference type="RefSeq" id="WP_003131994.1">
    <property type="nucleotide sequence ID" value="NC_002662.1"/>
</dbReference>
<dbReference type="SMR" id="Q9CDL3"/>
<dbReference type="PaxDb" id="272623-L0267"/>
<dbReference type="EnsemblBacteria" id="AAK06304">
    <property type="protein sequence ID" value="AAK06304"/>
    <property type="gene ID" value="L0267"/>
</dbReference>
<dbReference type="GeneID" id="89634551"/>
<dbReference type="KEGG" id="lla:L0267"/>
<dbReference type="PATRIC" id="fig|272623.7.peg.2370"/>
<dbReference type="eggNOG" id="COG2255">
    <property type="taxonomic scope" value="Bacteria"/>
</dbReference>
<dbReference type="HOGENOM" id="CLU_055599_1_0_9"/>
<dbReference type="OrthoDB" id="9804478at2"/>
<dbReference type="Proteomes" id="UP000002196">
    <property type="component" value="Chromosome"/>
</dbReference>
<dbReference type="GO" id="GO:0005737">
    <property type="term" value="C:cytoplasm"/>
    <property type="evidence" value="ECO:0007669"/>
    <property type="project" value="UniProtKB-SubCell"/>
</dbReference>
<dbReference type="GO" id="GO:0048476">
    <property type="term" value="C:Holliday junction resolvase complex"/>
    <property type="evidence" value="ECO:0007669"/>
    <property type="project" value="UniProtKB-UniRule"/>
</dbReference>
<dbReference type="GO" id="GO:0005524">
    <property type="term" value="F:ATP binding"/>
    <property type="evidence" value="ECO:0007669"/>
    <property type="project" value="UniProtKB-UniRule"/>
</dbReference>
<dbReference type="GO" id="GO:0016887">
    <property type="term" value="F:ATP hydrolysis activity"/>
    <property type="evidence" value="ECO:0007669"/>
    <property type="project" value="InterPro"/>
</dbReference>
<dbReference type="GO" id="GO:0000400">
    <property type="term" value="F:four-way junction DNA binding"/>
    <property type="evidence" value="ECO:0007669"/>
    <property type="project" value="UniProtKB-UniRule"/>
</dbReference>
<dbReference type="GO" id="GO:0009378">
    <property type="term" value="F:four-way junction helicase activity"/>
    <property type="evidence" value="ECO:0007669"/>
    <property type="project" value="InterPro"/>
</dbReference>
<dbReference type="GO" id="GO:0006310">
    <property type="term" value="P:DNA recombination"/>
    <property type="evidence" value="ECO:0007669"/>
    <property type="project" value="UniProtKB-UniRule"/>
</dbReference>
<dbReference type="GO" id="GO:0006281">
    <property type="term" value="P:DNA repair"/>
    <property type="evidence" value="ECO:0007669"/>
    <property type="project" value="UniProtKB-UniRule"/>
</dbReference>
<dbReference type="CDD" id="cd00009">
    <property type="entry name" value="AAA"/>
    <property type="match status" value="1"/>
</dbReference>
<dbReference type="Gene3D" id="1.10.8.60">
    <property type="match status" value="1"/>
</dbReference>
<dbReference type="Gene3D" id="3.40.50.300">
    <property type="entry name" value="P-loop containing nucleotide triphosphate hydrolases"/>
    <property type="match status" value="1"/>
</dbReference>
<dbReference type="Gene3D" id="1.10.10.10">
    <property type="entry name" value="Winged helix-like DNA-binding domain superfamily/Winged helix DNA-binding domain"/>
    <property type="match status" value="1"/>
</dbReference>
<dbReference type="HAMAP" id="MF_00016">
    <property type="entry name" value="DNA_HJ_migration_RuvB"/>
    <property type="match status" value="1"/>
</dbReference>
<dbReference type="InterPro" id="IPR003593">
    <property type="entry name" value="AAA+_ATPase"/>
</dbReference>
<dbReference type="InterPro" id="IPR041445">
    <property type="entry name" value="AAA_lid_4"/>
</dbReference>
<dbReference type="InterPro" id="IPR004605">
    <property type="entry name" value="DNA_helicase_Holl-junc_RuvB"/>
</dbReference>
<dbReference type="InterPro" id="IPR027417">
    <property type="entry name" value="P-loop_NTPase"/>
</dbReference>
<dbReference type="InterPro" id="IPR008824">
    <property type="entry name" value="RuvB-like_N"/>
</dbReference>
<dbReference type="InterPro" id="IPR008823">
    <property type="entry name" value="RuvB_C"/>
</dbReference>
<dbReference type="InterPro" id="IPR036388">
    <property type="entry name" value="WH-like_DNA-bd_sf"/>
</dbReference>
<dbReference type="InterPro" id="IPR036390">
    <property type="entry name" value="WH_DNA-bd_sf"/>
</dbReference>
<dbReference type="NCBIfam" id="NF000868">
    <property type="entry name" value="PRK00080.1"/>
    <property type="match status" value="1"/>
</dbReference>
<dbReference type="NCBIfam" id="TIGR00635">
    <property type="entry name" value="ruvB"/>
    <property type="match status" value="1"/>
</dbReference>
<dbReference type="PANTHER" id="PTHR42848">
    <property type="match status" value="1"/>
</dbReference>
<dbReference type="PANTHER" id="PTHR42848:SF1">
    <property type="entry name" value="HOLLIDAY JUNCTION BRANCH MIGRATION COMPLEX SUBUNIT RUVB"/>
    <property type="match status" value="1"/>
</dbReference>
<dbReference type="Pfam" id="PF17864">
    <property type="entry name" value="AAA_lid_4"/>
    <property type="match status" value="1"/>
</dbReference>
<dbReference type="Pfam" id="PF05491">
    <property type="entry name" value="RuvB_C"/>
    <property type="match status" value="1"/>
</dbReference>
<dbReference type="Pfam" id="PF05496">
    <property type="entry name" value="RuvB_N"/>
    <property type="match status" value="1"/>
</dbReference>
<dbReference type="SMART" id="SM00382">
    <property type="entry name" value="AAA"/>
    <property type="match status" value="1"/>
</dbReference>
<dbReference type="SUPFAM" id="SSF52540">
    <property type="entry name" value="P-loop containing nucleoside triphosphate hydrolases"/>
    <property type="match status" value="1"/>
</dbReference>
<dbReference type="SUPFAM" id="SSF46785">
    <property type="entry name" value="Winged helix' DNA-binding domain"/>
    <property type="match status" value="1"/>
</dbReference>
<gene>
    <name evidence="1" type="primary">ruvB</name>
    <name type="ordered locus">LL2206</name>
    <name type="ORF">L0267</name>
</gene>
<keyword id="KW-0067">ATP-binding</keyword>
<keyword id="KW-0963">Cytoplasm</keyword>
<keyword id="KW-0227">DNA damage</keyword>
<keyword id="KW-0233">DNA recombination</keyword>
<keyword id="KW-0234">DNA repair</keyword>
<keyword id="KW-0238">DNA-binding</keyword>
<keyword id="KW-0378">Hydrolase</keyword>
<keyword id="KW-0547">Nucleotide-binding</keyword>
<keyword id="KW-1185">Reference proteome</keyword>
<name>RUVB_LACLA</name>